<keyword id="KW-1003">Cell membrane</keyword>
<keyword id="KW-0141">cGMP biosynthesis</keyword>
<keyword id="KW-0145">Chemotaxis</keyword>
<keyword id="KW-0325">Glycoprotein</keyword>
<keyword id="KW-0342">GTP-binding</keyword>
<keyword id="KW-0456">Lyase</keyword>
<keyword id="KW-0472">Membrane</keyword>
<keyword id="KW-0547">Nucleotide-binding</keyword>
<keyword id="KW-0675">Receptor</keyword>
<keyword id="KW-1185">Reference proteome</keyword>
<keyword id="KW-0732">Signal</keyword>
<keyword id="KW-0812">Transmembrane</keyword>
<keyword id="KW-1133">Transmembrane helix</keyword>
<dbReference type="EC" id="4.6.1.2" evidence="1"/>
<dbReference type="EMBL" id="BX284602">
    <property type="protein sequence ID" value="CAA88889.2"/>
    <property type="molecule type" value="Genomic_DNA"/>
</dbReference>
<dbReference type="RefSeq" id="NP_496218.2">
    <property type="nucleotide sequence ID" value="NM_063817.2"/>
</dbReference>
<dbReference type="SMR" id="Q23681"/>
<dbReference type="FunCoup" id="Q23681">
    <property type="interactions" value="107"/>
</dbReference>
<dbReference type="STRING" id="6239.ZK970.5.1"/>
<dbReference type="GlyCosmos" id="Q23681">
    <property type="glycosylation" value="7 sites, No reported glycans"/>
</dbReference>
<dbReference type="PaxDb" id="6239-ZK970.5"/>
<dbReference type="EnsemblMetazoa" id="ZK970.5.1">
    <property type="protein sequence ID" value="ZK970.5.1"/>
    <property type="gene ID" value="WBGene00001531"/>
</dbReference>
<dbReference type="GeneID" id="191642"/>
<dbReference type="KEGG" id="cel:CELE_ZK970.5"/>
<dbReference type="AGR" id="WB:WBGene00001531"/>
<dbReference type="CTD" id="191642"/>
<dbReference type="WormBase" id="ZK970.5">
    <property type="protein sequence ID" value="CE43236"/>
    <property type="gene ID" value="WBGene00001531"/>
    <property type="gene designation" value="gcy-4"/>
</dbReference>
<dbReference type="eggNOG" id="KOG1023">
    <property type="taxonomic scope" value="Eukaryota"/>
</dbReference>
<dbReference type="HOGENOM" id="CLU_001072_1_3_1"/>
<dbReference type="InParanoid" id="Q23681"/>
<dbReference type="OMA" id="FYMYGMA"/>
<dbReference type="OrthoDB" id="4062651at2759"/>
<dbReference type="PhylomeDB" id="Q23681"/>
<dbReference type="Reactome" id="R-CEL-2514859">
    <property type="pathway name" value="Inactivation, recovery and regulation of the phototransduction cascade"/>
</dbReference>
<dbReference type="PRO" id="PR:Q23681"/>
<dbReference type="Proteomes" id="UP000001940">
    <property type="component" value="Chromosome II"/>
</dbReference>
<dbReference type="Bgee" id="WBGene00001531">
    <property type="expression patterns" value="Expressed in material anatomical entity and 2 other cell types or tissues"/>
</dbReference>
<dbReference type="GO" id="GO:0005886">
    <property type="term" value="C:plasma membrane"/>
    <property type="evidence" value="ECO:0000318"/>
    <property type="project" value="GO_Central"/>
</dbReference>
<dbReference type="GO" id="GO:0005524">
    <property type="term" value="F:ATP binding"/>
    <property type="evidence" value="ECO:0007669"/>
    <property type="project" value="InterPro"/>
</dbReference>
<dbReference type="GO" id="GO:0005525">
    <property type="term" value="F:GTP binding"/>
    <property type="evidence" value="ECO:0007669"/>
    <property type="project" value="UniProtKB-KW"/>
</dbReference>
<dbReference type="GO" id="GO:0004383">
    <property type="term" value="F:guanylate cyclase activity"/>
    <property type="evidence" value="ECO:0000318"/>
    <property type="project" value="GO_Central"/>
</dbReference>
<dbReference type="GO" id="GO:0001653">
    <property type="term" value="F:peptide receptor activity"/>
    <property type="evidence" value="ECO:0000318"/>
    <property type="project" value="GO_Central"/>
</dbReference>
<dbReference type="GO" id="GO:0004672">
    <property type="term" value="F:protein kinase activity"/>
    <property type="evidence" value="ECO:0007669"/>
    <property type="project" value="InterPro"/>
</dbReference>
<dbReference type="GO" id="GO:0006182">
    <property type="term" value="P:cGMP biosynthetic process"/>
    <property type="evidence" value="ECO:0000318"/>
    <property type="project" value="GO_Central"/>
</dbReference>
<dbReference type="GO" id="GO:0007635">
    <property type="term" value="P:chemosensory behavior"/>
    <property type="evidence" value="ECO:0000315"/>
    <property type="project" value="UniProtKB"/>
</dbReference>
<dbReference type="GO" id="GO:0006935">
    <property type="term" value="P:chemotaxis"/>
    <property type="evidence" value="ECO:0000315"/>
    <property type="project" value="UniProtKB"/>
</dbReference>
<dbReference type="GO" id="GO:0035556">
    <property type="term" value="P:intracellular signal transduction"/>
    <property type="evidence" value="ECO:0007669"/>
    <property type="project" value="InterPro"/>
</dbReference>
<dbReference type="GO" id="GO:0007168">
    <property type="term" value="P:receptor guanylyl cyclase signaling pathway"/>
    <property type="evidence" value="ECO:0000318"/>
    <property type="project" value="GO_Central"/>
</dbReference>
<dbReference type="GO" id="GO:1902074">
    <property type="term" value="P:response to salt"/>
    <property type="evidence" value="ECO:0000316"/>
    <property type="project" value="UniProtKB"/>
</dbReference>
<dbReference type="CDD" id="cd07302">
    <property type="entry name" value="CHD"/>
    <property type="match status" value="1"/>
</dbReference>
<dbReference type="CDD" id="cd06352">
    <property type="entry name" value="PBP1_NPR_GC-like"/>
    <property type="match status" value="1"/>
</dbReference>
<dbReference type="FunFam" id="3.30.70.1230:FF:000023">
    <property type="entry name" value="Guanylate cyclase"/>
    <property type="match status" value="1"/>
</dbReference>
<dbReference type="FunFam" id="1.10.510.10:FF:001114">
    <property type="entry name" value="Receptor-type guanylate cyclase gcy-4"/>
    <property type="match status" value="1"/>
</dbReference>
<dbReference type="FunFam" id="3.40.50.2300:FF:000563">
    <property type="entry name" value="Receptor-type guanylate cyclase gcy-4"/>
    <property type="match status" value="1"/>
</dbReference>
<dbReference type="Gene3D" id="3.40.50.2300">
    <property type="match status" value="2"/>
</dbReference>
<dbReference type="Gene3D" id="3.30.70.1230">
    <property type="entry name" value="Nucleotide cyclase"/>
    <property type="match status" value="1"/>
</dbReference>
<dbReference type="Gene3D" id="1.10.510.10">
    <property type="entry name" value="Transferase(Phosphotransferase) domain 1"/>
    <property type="match status" value="1"/>
</dbReference>
<dbReference type="InterPro" id="IPR001054">
    <property type="entry name" value="A/G_cyclase"/>
</dbReference>
<dbReference type="InterPro" id="IPR018297">
    <property type="entry name" value="A/G_cyclase_CS"/>
</dbReference>
<dbReference type="InterPro" id="IPR001828">
    <property type="entry name" value="ANF_lig-bd_rcpt"/>
</dbReference>
<dbReference type="InterPro" id="IPR050401">
    <property type="entry name" value="Cyclic_nucleotide_synthase"/>
</dbReference>
<dbReference type="InterPro" id="IPR011009">
    <property type="entry name" value="Kinase-like_dom_sf"/>
</dbReference>
<dbReference type="InterPro" id="IPR029787">
    <property type="entry name" value="Nucleotide_cyclase"/>
</dbReference>
<dbReference type="InterPro" id="IPR028082">
    <property type="entry name" value="Peripla_BP_I"/>
</dbReference>
<dbReference type="InterPro" id="IPR000719">
    <property type="entry name" value="Prot_kinase_dom"/>
</dbReference>
<dbReference type="InterPro" id="IPR001245">
    <property type="entry name" value="Ser-Thr/Tyr_kinase_cat_dom"/>
</dbReference>
<dbReference type="PANTHER" id="PTHR11920">
    <property type="entry name" value="GUANYLYL CYCLASE"/>
    <property type="match status" value="1"/>
</dbReference>
<dbReference type="PANTHER" id="PTHR11920:SF68">
    <property type="entry name" value="RECEPTOR-TYPE GUANYLATE CYCLASE GCY-4"/>
    <property type="match status" value="1"/>
</dbReference>
<dbReference type="Pfam" id="PF01094">
    <property type="entry name" value="ANF_receptor"/>
    <property type="match status" value="1"/>
</dbReference>
<dbReference type="Pfam" id="PF00211">
    <property type="entry name" value="Guanylate_cyc"/>
    <property type="match status" value="1"/>
</dbReference>
<dbReference type="Pfam" id="PF07714">
    <property type="entry name" value="PK_Tyr_Ser-Thr"/>
    <property type="match status" value="1"/>
</dbReference>
<dbReference type="SMART" id="SM00044">
    <property type="entry name" value="CYCc"/>
    <property type="match status" value="1"/>
</dbReference>
<dbReference type="SUPFAM" id="SSF55073">
    <property type="entry name" value="Nucleotide cyclase"/>
    <property type="match status" value="1"/>
</dbReference>
<dbReference type="SUPFAM" id="SSF53822">
    <property type="entry name" value="Periplasmic binding protein-like I"/>
    <property type="match status" value="1"/>
</dbReference>
<dbReference type="SUPFAM" id="SSF56112">
    <property type="entry name" value="Protein kinase-like (PK-like)"/>
    <property type="match status" value="1"/>
</dbReference>
<dbReference type="PROSITE" id="PS00452">
    <property type="entry name" value="GUANYLATE_CYCLASE_1"/>
    <property type="match status" value="1"/>
</dbReference>
<dbReference type="PROSITE" id="PS50125">
    <property type="entry name" value="GUANYLATE_CYCLASE_2"/>
    <property type="match status" value="1"/>
</dbReference>
<dbReference type="PROSITE" id="PS50011">
    <property type="entry name" value="PROTEIN_KINASE_DOM"/>
    <property type="match status" value="1"/>
</dbReference>
<comment type="function">
    <text evidence="1 8">Guanylate cyclase involved in the production of the second messenger cGMP (By similarity). Regulates chemotaxis responses toward Br(1-) and I(1-) salt ions in ASE right (ASER) sensory neuron (PubMed:19523832).</text>
</comment>
<comment type="catalytic activity">
    <reaction evidence="1">
        <text>GTP = 3',5'-cyclic GMP + diphosphate</text>
        <dbReference type="Rhea" id="RHEA:13665"/>
        <dbReference type="ChEBI" id="CHEBI:33019"/>
        <dbReference type="ChEBI" id="CHEBI:37565"/>
        <dbReference type="ChEBI" id="CHEBI:57746"/>
        <dbReference type="EC" id="4.6.1.2"/>
    </reaction>
</comment>
<comment type="subcellular location">
    <subcellularLocation>
        <location evidence="9">Cell membrane</location>
        <topology evidence="9">Single-pass type I membrane protein</topology>
    </subcellularLocation>
</comment>
<comment type="tissue specificity">
    <text evidence="7">Expression is biased toward ASE right (ASER) sensory neuron.</text>
</comment>
<comment type="domain">
    <text evidence="4">The protein kinase domain is predicted to be catalytically inactive.</text>
</comment>
<comment type="similarity">
    <text evidence="3">Belongs to the adenylyl cyclase class-4/guanylyl cyclase family.</text>
</comment>
<reference evidence="10" key="1">
    <citation type="journal article" date="1998" name="Science">
        <title>Genome sequence of the nematode C. elegans: a platform for investigating biology.</title>
        <authorList>
            <consortium name="The C. elegans sequencing consortium"/>
        </authorList>
    </citation>
    <scope>NUCLEOTIDE SEQUENCE [LARGE SCALE GENOMIC DNA]</scope>
    <source>
        <strain evidence="10">Bristol N2</strain>
    </source>
</reference>
<reference evidence="9" key="2">
    <citation type="journal article" date="2006" name="Genetics">
        <title>Searching for neuronal left/right asymmetry: genomewide analysis of nematode receptor-type guanylyl cyclases.</title>
        <authorList>
            <person name="Ortiz C.O."/>
            <person name="Etchberger J.F."/>
            <person name="Posy S.L."/>
            <person name="Frokjaer-Jensen C."/>
            <person name="Lockery S."/>
            <person name="Honig B."/>
            <person name="Hobert O."/>
        </authorList>
    </citation>
    <scope>TISSUE SPECIFICITY</scope>
</reference>
<reference evidence="9" key="3">
    <citation type="journal article" date="2009" name="Curr. Biol.">
        <title>Lateralized gustatory behavior of C. elegans is controlled by specific receptor-type guanylyl cyclases.</title>
        <authorList>
            <person name="Ortiz C.O."/>
            <person name="Faumont S."/>
            <person name="Takayama J."/>
            <person name="Ahmed H.K."/>
            <person name="Goldsmith A.D."/>
            <person name="Pocock R."/>
            <person name="McCormick K.E."/>
            <person name="Kunimoto H."/>
            <person name="Iino Y."/>
            <person name="Lockery S."/>
            <person name="Hobert O."/>
        </authorList>
    </citation>
    <scope>FUNCTION</scope>
</reference>
<name>GCY4_CAEEL</name>
<organism evidence="10">
    <name type="scientific">Caenorhabditis elegans</name>
    <dbReference type="NCBI Taxonomy" id="6239"/>
    <lineage>
        <taxon>Eukaryota</taxon>
        <taxon>Metazoa</taxon>
        <taxon>Ecdysozoa</taxon>
        <taxon>Nematoda</taxon>
        <taxon>Chromadorea</taxon>
        <taxon>Rhabditida</taxon>
        <taxon>Rhabditina</taxon>
        <taxon>Rhabditomorpha</taxon>
        <taxon>Rhabditoidea</taxon>
        <taxon>Rhabditidae</taxon>
        <taxon>Peloderinae</taxon>
        <taxon>Caenorhabditis</taxon>
    </lineage>
</organism>
<feature type="signal peptide" evidence="2">
    <location>
        <begin position="1"/>
        <end position="21"/>
    </location>
</feature>
<feature type="chain" id="PRO_0000433273" description="Receptor-type guanylate cyclase gcy-4" evidence="2">
    <location>
        <begin position="22"/>
        <end position="1136"/>
    </location>
</feature>
<feature type="topological domain" description="Extracellular" evidence="2">
    <location>
        <begin position="22"/>
        <end position="485"/>
    </location>
</feature>
<feature type="transmembrane region" description="Helical" evidence="2">
    <location>
        <begin position="486"/>
        <end position="506"/>
    </location>
</feature>
<feature type="topological domain" description="Cytoplasmic" evidence="2">
    <location>
        <begin position="507"/>
        <end position="1136"/>
    </location>
</feature>
<feature type="domain" description="Protein kinase" evidence="4">
    <location>
        <begin position="533"/>
        <end position="833"/>
    </location>
</feature>
<feature type="domain" description="Guanylate cyclase" evidence="3">
    <location>
        <begin position="891"/>
        <end position="1021"/>
    </location>
</feature>
<feature type="region of interest" description="Disordered" evidence="6">
    <location>
        <begin position="536"/>
        <end position="565"/>
    </location>
</feature>
<feature type="glycosylation site" description="N-linked (GlcNAc...) asparagine" evidence="5">
    <location>
        <position position="40"/>
    </location>
</feature>
<feature type="glycosylation site" description="N-linked (GlcNAc...) asparagine" evidence="5">
    <location>
        <position position="194"/>
    </location>
</feature>
<feature type="glycosylation site" description="N-linked (GlcNAc...) asparagine" evidence="5">
    <location>
        <position position="252"/>
    </location>
</feature>
<feature type="glycosylation site" description="N-linked (GlcNAc...) asparagine" evidence="5">
    <location>
        <position position="351"/>
    </location>
</feature>
<feature type="glycosylation site" description="N-linked (GlcNAc...) asparagine" evidence="5">
    <location>
        <position position="377"/>
    </location>
</feature>
<feature type="glycosylation site" description="N-linked (GlcNAc...) asparagine" evidence="5">
    <location>
        <position position="386"/>
    </location>
</feature>
<feature type="glycosylation site" description="N-linked (GlcNAc...) asparagine" evidence="5">
    <location>
        <position position="438"/>
    </location>
</feature>
<accession>Q23681</accession>
<evidence type="ECO:0000250" key="1">
    <source>
        <dbReference type="UniProtKB" id="Q19187"/>
    </source>
</evidence>
<evidence type="ECO:0000255" key="2"/>
<evidence type="ECO:0000255" key="3">
    <source>
        <dbReference type="PROSITE-ProRule" id="PRU00099"/>
    </source>
</evidence>
<evidence type="ECO:0000255" key="4">
    <source>
        <dbReference type="PROSITE-ProRule" id="PRU00159"/>
    </source>
</evidence>
<evidence type="ECO:0000255" key="5">
    <source>
        <dbReference type="PROSITE-ProRule" id="PRU00498"/>
    </source>
</evidence>
<evidence type="ECO:0000256" key="6">
    <source>
        <dbReference type="SAM" id="MobiDB-lite"/>
    </source>
</evidence>
<evidence type="ECO:0000269" key="7">
    <source>
    </source>
</evidence>
<evidence type="ECO:0000269" key="8">
    <source>
    </source>
</evidence>
<evidence type="ECO:0000305" key="9"/>
<evidence type="ECO:0000312" key="10">
    <source>
        <dbReference type="Proteomes" id="UP000001940"/>
    </source>
</evidence>
<evidence type="ECO:0000312" key="11">
    <source>
        <dbReference type="WormBase" id="ZK970.5"/>
    </source>
</evidence>
<protein>
    <recommendedName>
        <fullName evidence="9">Receptor-type guanylate cyclase gcy-4</fullName>
        <ecNumber evidence="1">4.6.1.2</ecNumber>
    </recommendedName>
</protein>
<proteinExistence type="evidence at transcript level"/>
<sequence length="1136" mass="128245">MRQLNYYIFISTILTYNLTHGQGPRPVIRVGITAALKTENGSIGWAYTGGAVPLALQYLKSHGYMLNFDFEFHVEYTECDLANTVRAGLNFMKTNNYDVIIGPPCAPALKMMGTLSTIYKKPVLGWGFVSESEISDMNRFPFVASVLPSTKTLGVVTSKLLEIYGWDRVALLYFKNELDYCSSVVNDVEKSLYNESKSVQIVMKAEIDGSNSESTSATLQVVKTRARVILFCAHAGGEKRFYLIQAGLLGMNSSEYVHVMLSMRSVGFGVQTSVGKKPLTLSGLPPIWESFTVNPDGMEDLAKSVAAKMIVIDTSSEVRDKTFLQYMTKNIVYAIREPPLSCKVPECLITNATGMGAYARHLFDVFYMYGMAVSSLNSTDPNVYGNLSLLIPKFTTAFEGMTGEVKLNEDLARKPLYQVYGLNSEYDQISLIDISLINDTVNVVFNYADGNTEVWHFWGGTRPPDTPVCGFLGKSCPLPIFEQYRALVIVAIAVTILILLAIIICMSSKIRNRRVEQSRLHSEWQIHAIKLRLPMHRRASKSSQESETESASETENFTSKSGDTMTSEFKETYTIQYLENDLVLTTAHQVQELSQAEMMKFVKLRKLDHENLNKFIGLSIDGSRFVSVWKMCSRGSLQDIISKGSFSMDYFFMFCMIRDIAEGLHYIHKSFLRHHGNLRSATCLVNDSWQVKLADFGLQFLQDEEEKPFKKNMLWAAPEVIRGSLSIEQMDSSADIYSFAIVASEILTKREAWDLSRRKEGYEEIKYAVKKGGQFVLRPDLHIDIEVNQTLLALVKDCWCENPEERPSAENVCKVLFDMTPNTEDNLMDHVFSMLEEYTSSLEVEVGERTKELTLEKKKSDILLGRMLPKQVAERLKAGQAVEPESFDLVTVFFSDLVKFTDLASKCSPFQVVNLLNDVFSNFDSIIEKHDVYKVESIGDGFLCVSGLPNRNGMEHIRQIVGMSLCFMEFCRNFRIPHLPRERVELRVGINSGPCVAGVVGLSMPRYCLFGDTVNTASRMESNGKPSMIHMSEAAHSLLVNNYPYQFETNSRGEVIIKGKGVMETYWLLGKMSLSNQSTPPITKVNHKPRKIASFTDSELTNYSFRSVSPYVENLSDNDDEEIRRVLRREMMRVEV</sequence>
<gene>
    <name evidence="11" type="primary">gcy-4</name>
    <name evidence="11" type="ORF">ZK970.5</name>
</gene>